<protein>
    <recommendedName>
        <fullName>Sodium channel protein type 10 subunit alpha</fullName>
    </recommendedName>
    <alternativeName>
        <fullName>Peripheral nerve sodium channel 3</fullName>
        <shortName>PN3</shortName>
    </alternativeName>
    <alternativeName>
        <fullName>Sensory neuron sodium channel</fullName>
    </alternativeName>
    <alternativeName>
        <fullName>Sodium channel protein type X subunit alpha</fullName>
    </alternativeName>
    <alternativeName>
        <fullName>Voltage-gated sodium channel subunit alpha Nav1.8</fullName>
    </alternativeName>
</protein>
<organism>
    <name type="scientific">Rattus norvegicus</name>
    <name type="common">Rat</name>
    <dbReference type="NCBI Taxonomy" id="10116"/>
    <lineage>
        <taxon>Eukaryota</taxon>
        <taxon>Metazoa</taxon>
        <taxon>Chordata</taxon>
        <taxon>Craniata</taxon>
        <taxon>Vertebrata</taxon>
        <taxon>Euteleostomi</taxon>
        <taxon>Mammalia</taxon>
        <taxon>Eutheria</taxon>
        <taxon>Euarchontoglires</taxon>
        <taxon>Glires</taxon>
        <taxon>Rodentia</taxon>
        <taxon>Myomorpha</taxon>
        <taxon>Muroidea</taxon>
        <taxon>Muridae</taxon>
        <taxon>Murinae</taxon>
        <taxon>Rattus</taxon>
    </lineage>
</organism>
<proteinExistence type="evidence at protein level"/>
<dbReference type="EMBL" id="X92184">
    <property type="protein sequence ID" value="CAA63095.1"/>
    <property type="molecule type" value="mRNA"/>
</dbReference>
<dbReference type="EMBL" id="U53833">
    <property type="protein sequence ID" value="AAC52619.1"/>
    <property type="molecule type" value="Genomic_DNA"/>
</dbReference>
<dbReference type="EMBL" id="AJ623271">
    <property type="protein sequence ID" value="CAF25041.1"/>
    <property type="molecule type" value="mRNA"/>
</dbReference>
<dbReference type="PIR" id="S68453">
    <property type="entry name" value="S68453"/>
</dbReference>
<dbReference type="RefSeq" id="NP_058943.2">
    <molecule id="Q62968-1"/>
    <property type="nucleotide sequence ID" value="NM_017247.2"/>
</dbReference>
<dbReference type="RefSeq" id="XP_038936892.1">
    <molecule id="Q62968-2"/>
    <property type="nucleotide sequence ID" value="XM_039080964.2"/>
</dbReference>
<dbReference type="SMR" id="Q62968"/>
<dbReference type="BioGRID" id="248204">
    <property type="interactions" value="2"/>
</dbReference>
<dbReference type="CORUM" id="Q62968"/>
<dbReference type="ELM" id="Q62968"/>
<dbReference type="FunCoup" id="Q62968">
    <property type="interactions" value="155"/>
</dbReference>
<dbReference type="IntAct" id="Q62968">
    <property type="interactions" value="23"/>
</dbReference>
<dbReference type="STRING" id="10116.ENSRNOP00000047944"/>
<dbReference type="BindingDB" id="Q62968"/>
<dbReference type="ChEMBL" id="CHEMBL4017"/>
<dbReference type="DrugCentral" id="Q62968"/>
<dbReference type="GuidetoPHARMACOLOGY" id="585"/>
<dbReference type="TCDB" id="1.A.1.10.6">
    <property type="family name" value="the voltage-gated ion channel (vic) superfamily"/>
</dbReference>
<dbReference type="GlyCosmos" id="Q62968">
    <property type="glycosylation" value="8 sites, No reported glycans"/>
</dbReference>
<dbReference type="GlyGen" id="Q62968">
    <property type="glycosylation" value="8 sites"/>
</dbReference>
<dbReference type="iPTMnet" id="Q62968"/>
<dbReference type="PhosphoSitePlus" id="Q62968"/>
<dbReference type="PaxDb" id="10116-ENSRNOP00000047944"/>
<dbReference type="ABCD" id="Q62968">
    <property type="antibodies" value="1 sequenced antibody"/>
</dbReference>
<dbReference type="Ensembl" id="ENSRNOT00000046864.5">
    <molecule id="Q62968-1"/>
    <property type="protein sequence ID" value="ENSRNOP00000047944.4"/>
    <property type="gene ID" value="ENSRNOG00000032473.5"/>
</dbReference>
<dbReference type="GeneID" id="29571"/>
<dbReference type="KEGG" id="rno:29571"/>
<dbReference type="UCSC" id="RGD:3629">
    <molecule id="Q62968-1"/>
    <property type="organism name" value="rat"/>
</dbReference>
<dbReference type="AGR" id="RGD:3629"/>
<dbReference type="CTD" id="6336"/>
<dbReference type="RGD" id="3629">
    <property type="gene designation" value="Scn10a"/>
</dbReference>
<dbReference type="eggNOG" id="KOG2301">
    <property type="taxonomic scope" value="Eukaryota"/>
</dbReference>
<dbReference type="GeneTree" id="ENSGT00940000154992"/>
<dbReference type="HOGENOM" id="CLU_000540_5_0_1"/>
<dbReference type="InParanoid" id="Q62968"/>
<dbReference type="OMA" id="VERCEDH"/>
<dbReference type="PhylomeDB" id="Q62968"/>
<dbReference type="TreeFam" id="TF323985"/>
<dbReference type="PRO" id="PR:Q62968"/>
<dbReference type="Proteomes" id="UP000002494">
    <property type="component" value="Chromosome 8"/>
</dbReference>
<dbReference type="Bgee" id="ENSRNOG00000032473">
    <property type="expression patterns" value="Expressed in testis"/>
</dbReference>
<dbReference type="GO" id="GO:0030424">
    <property type="term" value="C:axon"/>
    <property type="evidence" value="ECO:0000314"/>
    <property type="project" value="ARUK-UCL"/>
</dbReference>
<dbReference type="GO" id="GO:0044299">
    <property type="term" value="C:C-fiber"/>
    <property type="evidence" value="ECO:0000266"/>
    <property type="project" value="RGD"/>
</dbReference>
<dbReference type="GO" id="GO:0071439">
    <property type="term" value="C:clathrin complex"/>
    <property type="evidence" value="ECO:0000314"/>
    <property type="project" value="RGD"/>
</dbReference>
<dbReference type="GO" id="GO:0098978">
    <property type="term" value="C:glutamatergic synapse"/>
    <property type="evidence" value="ECO:0000314"/>
    <property type="project" value="SynGO"/>
</dbReference>
<dbReference type="GO" id="GO:0005886">
    <property type="term" value="C:plasma membrane"/>
    <property type="evidence" value="ECO:0000250"/>
    <property type="project" value="UniProtKB"/>
</dbReference>
<dbReference type="GO" id="GO:0042734">
    <property type="term" value="C:presynaptic membrane"/>
    <property type="evidence" value="ECO:0000314"/>
    <property type="project" value="SynGO"/>
</dbReference>
<dbReference type="GO" id="GO:0001518">
    <property type="term" value="C:voltage-gated sodium channel complex"/>
    <property type="evidence" value="ECO:0000266"/>
    <property type="project" value="RGD"/>
</dbReference>
<dbReference type="GO" id="GO:0044325">
    <property type="term" value="F:transmembrane transporter binding"/>
    <property type="evidence" value="ECO:0000266"/>
    <property type="project" value="RGD"/>
</dbReference>
<dbReference type="GO" id="GO:0099508">
    <property type="term" value="F:voltage-gated monoatomic ion channel activity involved in regulation of presynaptic membrane potential"/>
    <property type="evidence" value="ECO:0000314"/>
    <property type="project" value="SynGO"/>
</dbReference>
<dbReference type="GO" id="GO:0005248">
    <property type="term" value="F:voltage-gated sodium channel activity"/>
    <property type="evidence" value="ECO:0000314"/>
    <property type="project" value="RGD"/>
</dbReference>
<dbReference type="GO" id="GO:0086006">
    <property type="term" value="F:voltage-gated sodium channel activity involved in cardiac muscle cell action potential"/>
    <property type="evidence" value="ECO:0000318"/>
    <property type="project" value="GO_Central"/>
</dbReference>
<dbReference type="GO" id="GO:0086016">
    <property type="term" value="P:AV node cell action potential"/>
    <property type="evidence" value="ECO:0000266"/>
    <property type="project" value="RGD"/>
</dbReference>
<dbReference type="GO" id="GO:0048266">
    <property type="term" value="P:behavioral response to pain"/>
    <property type="evidence" value="ECO:0000266"/>
    <property type="project" value="RGD"/>
</dbReference>
<dbReference type="GO" id="GO:0086043">
    <property type="term" value="P:bundle of His cell action potential"/>
    <property type="evidence" value="ECO:0000266"/>
    <property type="project" value="RGD"/>
</dbReference>
<dbReference type="GO" id="GO:0061337">
    <property type="term" value="P:cardiac conduction"/>
    <property type="evidence" value="ECO:0000266"/>
    <property type="project" value="RGD"/>
</dbReference>
<dbReference type="GO" id="GO:0007623">
    <property type="term" value="P:circadian rhythm"/>
    <property type="evidence" value="ECO:0000266"/>
    <property type="project" value="RGD"/>
</dbReference>
<dbReference type="GO" id="GO:0050974">
    <property type="term" value="P:detection of mechanical stimulus involved in sensory perception"/>
    <property type="evidence" value="ECO:0000266"/>
    <property type="project" value="RGD"/>
</dbReference>
<dbReference type="GO" id="GO:0050965">
    <property type="term" value="P:detection of temperature stimulus involved in sensory perception of pain"/>
    <property type="evidence" value="ECO:0000266"/>
    <property type="project" value="RGD"/>
</dbReference>
<dbReference type="GO" id="GO:0051649">
    <property type="term" value="P:establishment of localization in cell"/>
    <property type="evidence" value="ECO:0000266"/>
    <property type="project" value="RGD"/>
</dbReference>
<dbReference type="GO" id="GO:0086010">
    <property type="term" value="P:membrane depolarization during action potential"/>
    <property type="evidence" value="ECO:0000250"/>
    <property type="project" value="UniProtKB"/>
</dbReference>
<dbReference type="GO" id="GO:0019228">
    <property type="term" value="P:neuronal action potential"/>
    <property type="evidence" value="ECO:0000318"/>
    <property type="project" value="GO_Central"/>
</dbReference>
<dbReference type="GO" id="GO:0042475">
    <property type="term" value="P:odontogenesis of dentin-containing tooth"/>
    <property type="evidence" value="ECO:0000270"/>
    <property type="project" value="RGD"/>
</dbReference>
<dbReference type="GO" id="GO:0060371">
    <property type="term" value="P:regulation of atrial cardiac muscle cell membrane depolarization"/>
    <property type="evidence" value="ECO:0000266"/>
    <property type="project" value="RGD"/>
</dbReference>
<dbReference type="GO" id="GO:0055117">
    <property type="term" value="P:regulation of cardiac muscle contraction"/>
    <property type="evidence" value="ECO:0000266"/>
    <property type="project" value="RGD"/>
</dbReference>
<dbReference type="GO" id="GO:0002027">
    <property type="term" value="P:regulation of heart rate"/>
    <property type="evidence" value="ECO:0000266"/>
    <property type="project" value="RGD"/>
</dbReference>
<dbReference type="GO" id="GO:0034765">
    <property type="term" value="P:regulation of monoatomic ion transmembrane transport"/>
    <property type="evidence" value="ECO:0000266"/>
    <property type="project" value="RGD"/>
</dbReference>
<dbReference type="GO" id="GO:0035725">
    <property type="term" value="P:sodium ion transmembrane transport"/>
    <property type="evidence" value="ECO:0000266"/>
    <property type="project" value="RGD"/>
</dbReference>
<dbReference type="GO" id="GO:0006814">
    <property type="term" value="P:sodium ion transport"/>
    <property type="evidence" value="ECO:0000314"/>
    <property type="project" value="RGD"/>
</dbReference>
<dbReference type="CDD" id="cd13433">
    <property type="entry name" value="Na_channel_gate"/>
    <property type="match status" value="1"/>
</dbReference>
<dbReference type="FunFam" id="1.10.238.10:FF:000002">
    <property type="entry name" value="Sodium channel protein"/>
    <property type="match status" value="1"/>
</dbReference>
<dbReference type="FunFam" id="1.10.287.70:FF:000001">
    <property type="entry name" value="Sodium channel protein"/>
    <property type="match status" value="1"/>
</dbReference>
<dbReference type="FunFam" id="1.20.120.350:FF:000002">
    <property type="entry name" value="Sodium channel protein"/>
    <property type="match status" value="1"/>
</dbReference>
<dbReference type="FunFam" id="1.20.120.350:FF:000004">
    <property type="entry name" value="Sodium channel protein"/>
    <property type="match status" value="1"/>
</dbReference>
<dbReference type="FunFam" id="1.20.120.350:FF:000049">
    <property type="entry name" value="Sodium channel protein"/>
    <property type="match status" value="1"/>
</dbReference>
<dbReference type="FunFam" id="1.20.5.1190:FF:000007">
    <property type="entry name" value="Sodium channel protein"/>
    <property type="match status" value="1"/>
</dbReference>
<dbReference type="FunFam" id="1.20.120.350:FF:000003">
    <property type="entry name" value="Voltage-dependent sodium channel"/>
    <property type="match status" value="1"/>
</dbReference>
<dbReference type="FunFam" id="1.10.287.70:FF:000049">
    <property type="entry name" value="Voltage-dependent sodium channel 2"/>
    <property type="match status" value="1"/>
</dbReference>
<dbReference type="Gene3D" id="1.10.287.70">
    <property type="match status" value="4"/>
</dbReference>
<dbReference type="Gene3D" id="1.10.238.10">
    <property type="entry name" value="EF-hand"/>
    <property type="match status" value="1"/>
</dbReference>
<dbReference type="Gene3D" id="1.20.5.1190">
    <property type="entry name" value="iswi atpase"/>
    <property type="match status" value="1"/>
</dbReference>
<dbReference type="Gene3D" id="1.20.120.350">
    <property type="entry name" value="Voltage-gated potassium channels. Chain C"/>
    <property type="match status" value="4"/>
</dbReference>
<dbReference type="InterPro" id="IPR005821">
    <property type="entry name" value="Ion_trans_dom"/>
</dbReference>
<dbReference type="InterPro" id="IPR001696">
    <property type="entry name" value="Na_channel_asu"/>
</dbReference>
<dbReference type="InterPro" id="IPR044564">
    <property type="entry name" value="Na_chnl_inactivation_gate"/>
</dbReference>
<dbReference type="InterPro" id="IPR010526">
    <property type="entry name" value="Na_trans_assoc_dom"/>
</dbReference>
<dbReference type="InterPro" id="IPR043203">
    <property type="entry name" value="VGCC_Ca_Na"/>
</dbReference>
<dbReference type="InterPro" id="IPR027359">
    <property type="entry name" value="Volt_channel_dom_sf"/>
</dbReference>
<dbReference type="PANTHER" id="PTHR10037:SF208">
    <property type="entry name" value="SODIUM CHANNEL PROTEIN TYPE 10 SUBUNIT ALPHA"/>
    <property type="match status" value="1"/>
</dbReference>
<dbReference type="PANTHER" id="PTHR10037">
    <property type="entry name" value="VOLTAGE-GATED CATION CHANNEL CALCIUM AND SODIUM"/>
    <property type="match status" value="1"/>
</dbReference>
<dbReference type="Pfam" id="PF00520">
    <property type="entry name" value="Ion_trans"/>
    <property type="match status" value="4"/>
</dbReference>
<dbReference type="Pfam" id="PF24609">
    <property type="entry name" value="IQ_SCN5A_C"/>
    <property type="match status" value="1"/>
</dbReference>
<dbReference type="Pfam" id="PF06512">
    <property type="entry name" value="Na_trans_assoc"/>
    <property type="match status" value="1"/>
</dbReference>
<dbReference type="PRINTS" id="PR00170">
    <property type="entry name" value="NACHANNEL"/>
</dbReference>
<dbReference type="SUPFAM" id="SSF81324">
    <property type="entry name" value="Voltage-gated potassium channels"/>
    <property type="match status" value="4"/>
</dbReference>
<name>SCNAA_RAT</name>
<keyword id="KW-0025">Alternative splicing</keyword>
<keyword id="KW-1003">Cell membrane</keyword>
<keyword id="KW-1015">Disulfide bond</keyword>
<keyword id="KW-0325">Glycoprotein</keyword>
<keyword id="KW-0407">Ion channel</keyword>
<keyword id="KW-0406">Ion transport</keyword>
<keyword id="KW-0472">Membrane</keyword>
<keyword id="KW-0597">Phosphoprotein</keyword>
<keyword id="KW-1185">Reference proteome</keyword>
<keyword id="KW-0677">Repeat</keyword>
<keyword id="KW-0915">Sodium</keyword>
<keyword id="KW-0894">Sodium channel</keyword>
<keyword id="KW-0739">Sodium transport</keyword>
<keyword id="KW-0812">Transmembrane</keyword>
<keyword id="KW-1133">Transmembrane helix</keyword>
<keyword id="KW-0813">Transport</keyword>
<keyword id="KW-0832">Ubl conjugation</keyword>
<keyword id="KW-0851">Voltage-gated channel</keyword>
<feature type="chain" id="PRO_0000048509" description="Sodium channel protein type 10 subunit alpha">
    <location>
        <begin position="1"/>
        <end position="1956"/>
    </location>
</feature>
<feature type="topological domain" description="Cytoplasmic" evidence="16">
    <location>
        <begin position="1"/>
        <end position="125"/>
    </location>
</feature>
<feature type="transmembrane region" description="Helical; Name=S1 of repeat I" evidence="5">
    <location>
        <begin position="126"/>
        <end position="149"/>
    </location>
</feature>
<feature type="topological domain" description="Extracellular" evidence="16">
    <location>
        <begin position="150"/>
        <end position="154"/>
    </location>
</feature>
<feature type="transmembrane region" description="Helical; Name=S2 of repeat I" evidence="5">
    <location>
        <begin position="155"/>
        <end position="174"/>
    </location>
</feature>
<feature type="topological domain" description="Cytoplasmic" evidence="16">
    <location>
        <begin position="175"/>
        <end position="187"/>
    </location>
</feature>
<feature type="transmembrane region" description="Helical; Name=S3 of repeat I" evidence="5">
    <location>
        <begin position="188"/>
        <end position="206"/>
    </location>
</feature>
<feature type="topological domain" description="Extracellular" evidence="16">
    <location>
        <begin position="207"/>
        <end position="212"/>
    </location>
</feature>
<feature type="transmembrane region" description="Helical; Voltage-sensor; Name=S4 of repeat I" evidence="5">
    <location>
        <begin position="213"/>
        <end position="232"/>
    </location>
</feature>
<feature type="topological domain" description="Cytoplasmic" evidence="16">
    <location>
        <begin position="233"/>
        <end position="248"/>
    </location>
</feature>
<feature type="transmembrane region" description="Helical; Name=S5 of repeat I" evidence="5">
    <location>
        <begin position="249"/>
        <end position="272"/>
    </location>
</feature>
<feature type="topological domain" description="Extracellular" evidence="16">
    <location>
        <begin position="273"/>
        <end position="340"/>
    </location>
</feature>
<feature type="intramembrane region" description="Pore-forming" evidence="2">
    <location>
        <begin position="341"/>
        <end position="365"/>
    </location>
</feature>
<feature type="topological domain" description="Extracellular" evidence="16">
    <location>
        <begin position="366"/>
        <end position="372"/>
    </location>
</feature>
<feature type="transmembrane region" description="Helical; Name=S6 of repeat I" evidence="5">
    <location>
        <begin position="373"/>
        <end position="398"/>
    </location>
</feature>
<feature type="topological domain" description="Cytoplasmic" evidence="16">
    <location>
        <begin position="399"/>
        <end position="658"/>
    </location>
</feature>
<feature type="transmembrane region" description="Helical; Name=S1 of repeat II" evidence="5">
    <location>
        <begin position="659"/>
        <end position="683"/>
    </location>
</feature>
<feature type="topological domain" description="Extracellular" evidence="16">
    <location>
        <begin position="684"/>
        <end position="694"/>
    </location>
</feature>
<feature type="transmembrane region" description="Helical; Name=S2 of repeat II" evidence="5">
    <location>
        <begin position="695"/>
        <end position="718"/>
    </location>
</feature>
<feature type="topological domain" description="Cytoplasmic" evidence="16">
    <location>
        <begin position="719"/>
        <end position="726"/>
    </location>
</feature>
<feature type="transmembrane region" description="Helical; Name=S3 of repeat II" evidence="5">
    <location>
        <begin position="727"/>
        <end position="746"/>
    </location>
</feature>
<feature type="topological domain" description="Extracellular" evidence="16">
    <location>
        <begin position="747"/>
        <end position="752"/>
    </location>
</feature>
<feature type="transmembrane region" description="Helical; Voltage-sensor; Name=S4 of repeat II" evidence="5">
    <location>
        <begin position="753"/>
        <end position="772"/>
    </location>
</feature>
<feature type="topological domain" description="Cytoplasmic" evidence="16">
    <location>
        <begin position="773"/>
        <end position="788"/>
    </location>
</feature>
<feature type="transmembrane region" description="Helical; Name=S5 of repeat II" evidence="5">
    <location>
        <begin position="789"/>
        <end position="809"/>
    </location>
</feature>
<feature type="topological domain" description="Extracellular" evidence="16">
    <location>
        <begin position="810"/>
        <end position="833"/>
    </location>
</feature>
<feature type="intramembrane region" description="Pore-forming" evidence="2">
    <location>
        <begin position="834"/>
        <end position="854"/>
    </location>
</feature>
<feature type="topological domain" description="Extracellular" evidence="16">
    <location>
        <begin position="855"/>
        <end position="863"/>
    </location>
</feature>
<feature type="transmembrane region" description="Helical; Name=S6 of repeat II" evidence="5">
    <location>
        <begin position="864"/>
        <end position="889"/>
    </location>
</feature>
<feature type="topological domain" description="Cytoplasmic" evidence="16">
    <location>
        <begin position="890"/>
        <end position="1148"/>
    </location>
</feature>
<feature type="transmembrane region" description="Helical; Name=S1 of repeat III" evidence="5">
    <location>
        <begin position="1149"/>
        <end position="1172"/>
    </location>
</feature>
<feature type="topological domain" description="Extracellular" evidence="16">
    <location>
        <begin position="1173"/>
        <end position="1185"/>
    </location>
</feature>
<feature type="transmembrane region" description="Helical; Name=S2 of repeat III" evidence="5">
    <location>
        <begin position="1186"/>
        <end position="1211"/>
    </location>
</feature>
<feature type="topological domain" description="Cytoplasmic" evidence="16">
    <location>
        <begin position="1212"/>
        <end position="1217"/>
    </location>
</feature>
<feature type="transmembrane region" description="Helical; Name=S3 of repeat III" evidence="5">
    <location>
        <begin position="1218"/>
        <end position="1239"/>
    </location>
</feature>
<feature type="topological domain" description="Extracellular" evidence="16">
    <location>
        <begin position="1240"/>
        <end position="1243"/>
    </location>
</feature>
<feature type="transmembrane region" description="Helical; Voltage-sensor; Name=S4 of repeat III" evidence="5">
    <location>
        <begin position="1244"/>
        <end position="1265"/>
    </location>
</feature>
<feature type="topological domain" description="Cytoplasmic" evidence="16">
    <location>
        <begin position="1266"/>
        <end position="1284"/>
    </location>
</feature>
<feature type="transmembrane region" description="Helical; Name=S5 of repeat III" evidence="5">
    <location>
        <begin position="1285"/>
        <end position="1312"/>
    </location>
</feature>
<feature type="topological domain" description="Extracellular" evidence="16">
    <location>
        <begin position="1313"/>
        <end position="1354"/>
    </location>
</feature>
<feature type="intramembrane region" description="Pore-forming" evidence="2">
    <location>
        <begin position="1355"/>
        <end position="1376"/>
    </location>
</feature>
<feature type="topological domain" description="Extracellular" evidence="16">
    <location>
        <begin position="1377"/>
        <end position="1392"/>
    </location>
</feature>
<feature type="transmembrane region" description="Helical; Name=S6 of repeat III" evidence="5">
    <location>
        <begin position="1393"/>
        <end position="1419"/>
    </location>
</feature>
<feature type="topological domain" description="Cytoplasmic" evidence="16">
    <location>
        <begin position="1420"/>
        <end position="1472"/>
    </location>
</feature>
<feature type="transmembrane region" description="Helical; Name=S1 of repeat IV" evidence="5">
    <location>
        <begin position="1473"/>
        <end position="1496"/>
    </location>
</feature>
<feature type="topological domain" description="Extracellular" evidence="16">
    <location>
        <begin position="1497"/>
        <end position="1507"/>
    </location>
</feature>
<feature type="transmembrane region" description="Helical; Name=S2 of repeat IV" evidence="5">
    <location>
        <begin position="1508"/>
        <end position="1531"/>
    </location>
</feature>
<feature type="topological domain" description="Cytoplasmic" evidence="16">
    <location>
        <begin position="1532"/>
        <end position="1537"/>
    </location>
</feature>
<feature type="transmembrane region" description="Helical; Name=S3 of repeat IV" evidence="5">
    <location>
        <begin position="1538"/>
        <end position="1561"/>
    </location>
</feature>
<feature type="topological domain" description="Extracellular" evidence="16">
    <location>
        <begin position="1562"/>
        <end position="1573"/>
    </location>
</feature>
<feature type="transmembrane region" description="Helical; Voltage-sensor; Name=S4 of repeat IV" evidence="5">
    <location>
        <begin position="1574"/>
        <end position="1595"/>
    </location>
</feature>
<feature type="topological domain" description="Cytoplasmic" evidence="16">
    <location>
        <begin position="1596"/>
        <end position="1610"/>
    </location>
</feature>
<feature type="transmembrane region" description="Helical; Name=S5 of repeat IV" evidence="5">
    <location>
        <begin position="1611"/>
        <end position="1633"/>
    </location>
</feature>
<feature type="topological domain" description="Extracellular" evidence="16">
    <location>
        <begin position="1634"/>
        <end position="1647"/>
    </location>
</feature>
<feature type="intramembrane region" description="Pore-forming" evidence="2">
    <location>
        <begin position="1648"/>
        <end position="1670"/>
    </location>
</feature>
<feature type="topological domain" description="Extracellular" evidence="16">
    <location>
        <begin position="1671"/>
        <end position="1698"/>
    </location>
</feature>
<feature type="transmembrane region" description="Helical; Name=S6 of repeat IV" evidence="5">
    <location>
        <begin position="1699"/>
        <end position="1723"/>
    </location>
</feature>
<feature type="topological domain" description="Cytoplasmic" evidence="16">
    <location>
        <begin position="1724"/>
        <end position="1956"/>
    </location>
</feature>
<feature type="repeat" description="I" evidence="16">
    <location>
        <begin position="116"/>
        <end position="404"/>
    </location>
</feature>
<feature type="repeat" description="II" evidence="16">
    <location>
        <begin position="646"/>
        <end position="910"/>
    </location>
</feature>
<feature type="repeat" description="III" evidence="16">
    <location>
        <begin position="1141"/>
        <end position="1450"/>
    </location>
</feature>
<feature type="repeat" description="IV" evidence="16">
    <location>
        <begin position="1459"/>
        <end position="1758"/>
    </location>
</feature>
<feature type="domain" description="IQ">
    <location>
        <begin position="1852"/>
        <end position="1881"/>
    </location>
</feature>
<feature type="region of interest" description="Disordered" evidence="6">
    <location>
        <begin position="31"/>
        <end position="54"/>
    </location>
</feature>
<feature type="region of interest" description="Disordered" evidence="6">
    <location>
        <begin position="441"/>
        <end position="484"/>
    </location>
</feature>
<feature type="region of interest" description="Disordered" evidence="6">
    <location>
        <begin position="537"/>
        <end position="581"/>
    </location>
</feature>
<feature type="region of interest" description="Disordered" evidence="6">
    <location>
        <begin position="1008"/>
        <end position="1094"/>
    </location>
</feature>
<feature type="region of interest" description="Disordered" evidence="6">
    <location>
        <begin position="1906"/>
        <end position="1956"/>
    </location>
</feature>
<feature type="compositionally biased region" description="Basic residues" evidence="6">
    <location>
        <begin position="32"/>
        <end position="41"/>
    </location>
</feature>
<feature type="compositionally biased region" description="Basic and acidic residues" evidence="6">
    <location>
        <begin position="42"/>
        <end position="54"/>
    </location>
</feature>
<feature type="compositionally biased region" description="Polar residues" evidence="6">
    <location>
        <begin position="441"/>
        <end position="453"/>
    </location>
</feature>
<feature type="compositionally biased region" description="Polar residues" evidence="6">
    <location>
        <begin position="475"/>
        <end position="484"/>
    </location>
</feature>
<feature type="compositionally biased region" description="Polar residues" evidence="6">
    <location>
        <begin position="1931"/>
        <end position="1940"/>
    </location>
</feature>
<feature type="modified residue" description="Phosphoserine" evidence="4">
    <location>
        <position position="440"/>
    </location>
</feature>
<feature type="modified residue" description="Phosphoserine" evidence="4">
    <location>
        <position position="443"/>
    </location>
</feature>
<feature type="modified residue" description="Phosphoserine" evidence="4">
    <location>
        <position position="466"/>
    </location>
</feature>
<feature type="modified residue" description="Phosphoserine" evidence="4">
    <location>
        <position position="478"/>
    </location>
</feature>
<feature type="modified residue" description="Phosphoserine" evidence="4">
    <location>
        <position position="611"/>
    </location>
</feature>
<feature type="modified residue" description="Phosphoserine" evidence="4">
    <location>
        <position position="614"/>
    </location>
</feature>
<feature type="modified residue" description="Phosphoserine; by PKC" evidence="4">
    <location>
        <position position="1452"/>
    </location>
</feature>
<feature type="glycosylation site" description="N-linked (GlcNAc...) asparagine" evidence="5">
    <location>
        <position position="279"/>
    </location>
</feature>
<feature type="glycosylation site" description="N-linked (GlcNAc...) asparagine" evidence="5">
    <location>
        <position position="288"/>
    </location>
</feature>
<feature type="glycosylation site" description="N-linked (GlcNAc...) asparagine" evidence="5">
    <location>
        <position position="311"/>
    </location>
</feature>
<feature type="glycosylation site" description="N-linked (GlcNAc...) asparagine" evidence="5">
    <location>
        <position position="334"/>
    </location>
</feature>
<feature type="glycosylation site" description="N-linked (GlcNAc...) asparagine" evidence="5">
    <location>
        <position position="1323"/>
    </location>
</feature>
<feature type="glycosylation site" description="N-linked (GlcNAc...) asparagine" evidence="5">
    <location>
        <position position="1329"/>
    </location>
</feature>
<feature type="glycosylation site" description="N-linked (GlcNAc...) asparagine" evidence="5">
    <location>
        <position position="1337"/>
    </location>
</feature>
<feature type="glycosylation site" description="N-linked (GlcNAc...) asparagine" evidence="5">
    <location>
        <position position="1687"/>
    </location>
</feature>
<feature type="disulfide bond" evidence="2">
    <location>
        <begin position="276"/>
        <end position="318"/>
    </location>
</feature>
<feature type="disulfide bond" evidence="2">
    <location>
        <begin position="856"/>
        <end position="865"/>
    </location>
</feature>
<feature type="splice variant" id="VSP_012258" description="In isoform 2." evidence="15">
    <location>
        <position position="1030"/>
    </location>
</feature>
<feature type="sequence conflict" description="In Ref. 1; CAA63095." evidence="16" ref="1">
    <original>A</original>
    <variation>D</variation>
    <location>
        <position position="59"/>
    </location>
</feature>
<feature type="sequence conflict" description="In Ref. 1; CAA63095." evidence="16" ref="1">
    <original>A</original>
    <variation>E</variation>
    <location>
        <position position="432"/>
    </location>
</feature>
<feature type="sequence conflict" description="In Ref. 1; CAA63095." evidence="16" ref="1">
    <original>T</original>
    <variation>TP</variation>
    <location>
        <position position="520"/>
    </location>
</feature>
<feature type="sequence conflict" description="In Ref. 1; CAA63095." evidence="16" ref="1">
    <original>D</original>
    <variation>H</variation>
    <location>
        <position position="587"/>
    </location>
</feature>
<feature type="sequence conflict" description="In Ref. 1; CAA63095." evidence="16" ref="1">
    <original>F</original>
    <variation>L</variation>
    <location>
        <position position="757"/>
    </location>
</feature>
<feature type="sequence conflict" description="In Ref. 1; CAA63095." evidence="16" ref="1">
    <original>R</original>
    <variation>H</variation>
    <location>
        <position position="938"/>
    </location>
</feature>
<feature type="sequence conflict" description="In Ref. 1; CAA63095." evidence="16" ref="1">
    <original>V</original>
    <variation>I</variation>
    <location>
        <position position="1896"/>
    </location>
</feature>
<reference key="1">
    <citation type="journal article" date="1996" name="Nature">
        <title>A tetrodotoxin-resistant voltage-gated sodium channel expressed by sensory neurons.</title>
        <authorList>
            <person name="Akopian A.N."/>
            <person name="Sivilotti L."/>
            <person name="Wood J.N."/>
        </authorList>
    </citation>
    <scope>NUCLEOTIDE SEQUENCE [MRNA] (ISOFORM 1)</scope>
    <scope>FUNCTION IN VOLTAGE-EVOKED DEPOLARIZATION</scope>
    <scope>TRANSPORTER ACTIVITY</scope>
    <scope>TISSUE SPECIFICITY</scope>
    <source>
        <tissue>Spinal ganglion</tissue>
    </source>
</reference>
<reference key="2">
    <citation type="journal article" date="1996" name="J. Biol. Chem.">
        <title>Structure and function of a novel voltage-gated, tetrodotoxin-resistant sodium channel specific to sensory neurons.</title>
        <authorList>
            <person name="Sangameswaran L."/>
            <person name="Delgado S.G."/>
            <person name="Fish L.M."/>
            <person name="Koch B.D."/>
            <person name="Jakeman L.B."/>
            <person name="Stewart G.R."/>
            <person name="Sze P."/>
            <person name="Hunter J.C."/>
            <person name="Eglen R.M."/>
            <person name="Herman R.C."/>
        </authorList>
    </citation>
    <scope>NUCLEOTIDE SEQUENCE [GENOMIC DNA] (ISOFORM 1)</scope>
    <scope>FUNCTION IN VOLTAGE-EVOKED DEPOLARIZATION</scope>
    <scope>TRANSPORTER ACTIVITY</scope>
    <scope>TISSUE SPECIFICITY</scope>
    <source>
        <strain>Sprague-Dawley</strain>
        <tissue>Spinal ganglion</tissue>
    </source>
</reference>
<reference key="3">
    <citation type="journal article" date="2004" name="Biochem. Biophys. Res. Commun.">
        <title>Role of auxiliary beta1-, beta2-, and beta3-subunits and their interaction with Na(v)1.8 voltage-gated sodium channel.</title>
        <authorList>
            <person name="Vijayaragavan K."/>
            <person name="Powell A.J."/>
            <person name="Kinghorn I.J."/>
            <person name="Chahine M."/>
        </authorList>
    </citation>
    <scope>NUCLEOTIDE SEQUENCE (ISOFORM 1)</scope>
    <scope>INTERACTION WITH SCN1B; SCN2B AND SCN3B</scope>
    <source>
        <strain>Sprague-Dawley</strain>
        <tissue>Spinal ganglion</tissue>
    </source>
</reference>
<reference key="4">
    <citation type="journal article" date="2004" name="J. Biol. Chem.">
        <title>Novel isoforms of the sodium channels Nav1.8 and Nav1.5 are produced by a conserved mechanism in mouse and rat.</title>
        <authorList>
            <person name="Kerr N.C.H."/>
            <person name="Holmes F.E."/>
            <person name="Wynick D."/>
        </authorList>
    </citation>
    <scope>NUCLEOTIDE SEQUENCE [MRNA] OF 963-1097 (ISOFORMS 1 AND 2)</scope>
    <source>
        <strain>Wistar</strain>
        <tissue>Spinal ganglion</tissue>
        <tissue>Trigeminal ganglion</tissue>
    </source>
</reference>
<reference key="5">
    <citation type="journal article" date="1997" name="Brain Res. Mol. Brain Res.">
        <title>Unilateral nerve injury down-regulates mRNA for Na+ channel SCN10A bilaterally in rat dorsal root ganglia.</title>
        <authorList>
            <person name="Oaklander A.L."/>
            <person name="Belzberg A.J."/>
        </authorList>
    </citation>
    <scope>INDUCTION</scope>
</reference>
<reference key="6">
    <citation type="journal article" date="2001" name="J. Neurosci.">
        <title>Developmental expression of the TTX-resistant voltage-gated sodium channels Nav1.8 (SNS) and Nav1.9 (SNS2) in primary sensory neurons.</title>
        <authorList>
            <person name="Benn S.C."/>
            <person name="Costigan M."/>
            <person name="Tate S."/>
            <person name="Fitzgerald M."/>
            <person name="Woolf C.J."/>
        </authorList>
    </citation>
    <scope>TISSUE SPECIFICITY</scope>
    <scope>DEVELOPMENTAL STAGE</scope>
</reference>
<reference key="7">
    <citation type="journal article" date="2002" name="Nature">
        <title>Annexin II light chain regulates sensory neuron-specific sodium channel expression.</title>
        <authorList>
            <person name="Okuse K."/>
            <person name="Malik-Hall M."/>
            <person name="Baker M.D."/>
            <person name="Poon W.-Y.L."/>
            <person name="Kong H."/>
            <person name="Chao M.V."/>
            <person name="Wood J.N."/>
        </authorList>
    </citation>
    <scope>SUBCELLULAR LOCATION</scope>
    <scope>INTERACTION WITH S100A10</scope>
</reference>
<reference key="8">
    <citation type="journal article" date="2003" name="Brain Res. Mol. Brain Res.">
        <title>Sensory neuron proteins interact with the intracellular domains of sodium channel NaV1.8.</title>
        <authorList>
            <person name="Malik-Hall M."/>
            <person name="Poon W.-Y.L."/>
            <person name="Baker M.D."/>
            <person name="Wood J.N."/>
            <person name="Okuse K."/>
        </authorList>
    </citation>
    <scope>INTERACTION WITH FSTL1; PRX; DYNLT1 AND PDZD2</scope>
    <scope>IDENTIFICATION IN COMPLEXES WITH PRX; DYNLT1 AND PDZD2</scope>
</reference>
<reference key="9">
    <citation type="journal article" date="2003" name="J. Neurosci.">
        <title>Redistribution of Na(V)1.8 in uninjured axons enables neuropathic pain.</title>
        <authorList>
            <person name="Gold M.S."/>
            <person name="Weinreich D."/>
            <person name="Kim C.-S."/>
            <person name="Wang R."/>
            <person name="Treanor J."/>
            <person name="Porreca F."/>
            <person name="Lai J."/>
        </authorList>
    </citation>
    <scope>FUNCTION IN PAIN</scope>
</reference>
<sequence length="1956" mass="219733">MELPFASVGTTNFRRFTPESLAEIEKQIAAHRAAKKARTKHRGQEDKGEKPRPQLDLKACNQLPKFYGELPAELVGEPLEDLDPFYSTHRTFMVLNKSRTISRFSATWALWLFSPFNLIRRTAIKVSVHSWFSIFITITILVNCVCMTRTDLPEKVEYVFTVIYTFEALIKILARGFCLNEFTYLRDPWNWLDFSVITLAYVGAAIDLRGISGLRTFRVLRALKTVSVIPGLKVIVGALIHSVRKLADVTILTVFCLSVFALVGLQLFKGNLKNKCIRNGTDPHKADNLSSEMAEYIFIKPGTTDPLLCGNGSDAGHCPGGYVCLKTPDNPDFNYTSFDSFAWAFLSLFRLMTQDSWERLYQQTLRASGKMYMVFFVLVIFLGSFYLVNLILAVVTMAYEEQSQATIAEIEAKEKKFQEALEVLQKEQEVLAALGIDTTSLQSHSGSPLASKNANERRPRVKSRVSEGSTDDNRSPQSDPYNQRRMSFLGLSSGRRRASHGSVFHFRAPSQDISFPDGITDDGVFHGDQESRRGSILLGRGAGQTGPLPRSPLPQSPNPGRRHGEEGQLGVPTGELTAGAPEGPALDTTGQKSFLSAGYLNEPFRAQRAMSVVSIMTSVIEELEESKLKCPPCLISFAQKYLIWECCPKWRKFKMALFELVTDPFAELTITLCIVVNTVFMAMEHYPMTDAFDAMLQAGNIVFTVFFTMEMAFKIIAFDPYYYFQKKWNIFDCVIVTVSLLELSASKKGSLSVLRTFRLLRVFKLAKSWPTLNTLIKIIGNSVGALGNLTFILAIIVFIFALVGKQLLSEDYGCRKDGVSVWNGEKLRWHMCDFFHSFLVVFRILCGEWIENMWVCMEVSQKSICLILFLTVMVLGNLVVLNLFIALLLNSFSADNLTAPEDDGEVNNLQLALARIQVLGHRASRAIASYISSHCRFRWPKVETQLGMKPPLTSSEAKNHIATDAVSAAVGNLTKPALSSPKENHGDFITDPNVWVSVPIAEGESDLDELEEDMEQASQSSWQEEDPKGQQEQLPQVQKCENHQAARSPASMMSSEDLAPYLGESWKRKDSPQVPAEGVDDTSSSEGSTVDCPDPEEILRKIPELADDLDEPDDCFTEGCTRRCPCCNVNTSKSPWATGWQVRKTCYRIVEHSWFESFIIFMILLSSGALAFEDNYLEEKPRVKSVLEYTDRVFTFIFVFEMLLKWVAYGFKKYFTNAWCWLDFLIVNISLTSLIAKILEYSDVASIKALRTLRALRPLRALSRFEGMRVVVDALVGAIPSIMNVLLVCLIFWLIFSIMGVNLFAGKFSKCVDTRNNPFSNVNSTMVNNKSECHNQNSTGHFFWVNVKVNFDNVAMGYLALLQVATFKGWMDIMYAAVDSGEINSQPNWENNLYMYLYFVVFIIFGGFFTLNLFVGVIIDNFNQQKKKLGGQDIFMTEEQKKYYNAMKKLGSKKPQKPIPRPLNKYQGFVFDIVTRQAFDIIIMVLICLNMITMMVETDEQGEEKTKVLGRINQFFVAVFTGECVMKMFALRQYYFTNGWNVFDFIVVILSIGSLLFSAILKSLENYFSPTLFRVIRLARIGRILRLIRAAKGIRTLLFALMMSLPALFNIGLLLFLVMFIYSIFGMASFANVVDEAGIDDMFNFKTFGNSMLCLFQITTSAGWDGLLSPILNTGPPYCDPNLPNSNGSRGNCGSPAVGIIFFTTYIIISFLIVVNMYIAVILENFNVATEESTEPLSEDDFDMFYETWEKFDPEATQFIAFSALSDFADTLSGPLRIPKPNQNILIQMDLPLVPGDKIHCLDILFAFTKNVLGESGELDSLKTNMEEKFMATNLSKASYEPIATTLRWKQEDLSATVIQKAYRSYMLHRSLTLSNTLHVPRAEEDGVSLPGEGYVTFMANSGLPDKSETASATSFPPSYDSVTRGLSDRANINPSSSMQNEDEVAAKEGNSPGPQ</sequence>
<comment type="function">
    <text evidence="9 12 13">Tetrodotoxin-resistant channel that mediates the voltage-dependent sodium ion permeability of excitable membranes. Assuming opened or closed conformations in response to the voltage difference across the membrane, the protein forms a sodium-selective channel through which sodium ions may pass in accordance with their electrochemical gradient. Plays a role in neuropathic pain mechanisms.</text>
</comment>
<comment type="catalytic activity">
    <reaction evidence="12 13">
        <text>Na(+)(in) = Na(+)(out)</text>
        <dbReference type="Rhea" id="RHEA:34963"/>
        <dbReference type="ChEBI" id="CHEBI:29101"/>
    </reaction>
</comment>
<comment type="subunit">
    <text evidence="8 10 11">The channel consists of an ion conducting pore forming alpha-subunit regulated by one or more associated auxiliary subunits SCN1B, SCN2B and SCN3B; electrophysiological properties may vary depending on the type of the associated beta subunits. Found in a number of complexes with PRX, DYNLT1 and PDZD2. Interacts with proteins such as FSTL1, PRX, DYNLT1, PDZD2, S100A10 and many others. Interacts with NEDD4 and NEDD4L.</text>
</comment>
<comment type="interaction">
    <interactant intactId="EBI-1800320">
        <id>Q62968</id>
    </interactant>
    <interactant intactId="EBI-920359">
        <id>Q9Z336</id>
        <label>Dynlt1</label>
    </interactant>
    <organismsDiffer>false</organismsDiffer>
    <experiments>2</experiments>
</comment>
<comment type="interaction">
    <interactant intactId="EBI-1800320">
        <id>Q62968</id>
    </interactant>
    <interactant intactId="EBI-1800492">
        <id>Q63425</id>
        <label>Prx</label>
    </interactant>
    <organismsDiffer>false</organismsDiffer>
    <experiments>2</experiments>
</comment>
<comment type="interaction">
    <interactant intactId="EBI-1800320">
        <id>Q62968</id>
    </interactant>
    <interactant intactId="EBI-1800351">
        <id>P05943</id>
        <label>S100a10</label>
    </interactant>
    <organismsDiffer>false</organismsDiffer>
    <experiments>4</experiments>
</comment>
<comment type="subcellular location">
    <subcellularLocation>
        <location evidence="2">Cell membrane</location>
        <topology evidence="2">Multi-pass membrane protein</topology>
    </subcellularLocation>
    <text evidence="8">It can be translocated to the cell membrane through association with S100A10.</text>
</comment>
<comment type="alternative products">
    <event type="alternative splicing"/>
    <isoform>
        <id>Q62968-1</id>
        <name>1</name>
        <sequence type="displayed"/>
    </isoform>
    <isoform>
        <id>Q62968-2</id>
        <name>2</name>
        <name>Nav1.8c</name>
        <sequence type="described" ref="VSP_012258"/>
    </isoform>
</comment>
<comment type="tissue specificity">
    <text evidence="7 12 13">Expressed in dorsal root ganglia, trigeminal ganglia, nodose ganglia and sciatic nerve.</text>
</comment>
<comment type="developmental stage">
    <text evidence="7">Expressed in dorsal root ganglia at 15 dpc onwards.</text>
</comment>
<comment type="induction">
    <text evidence="14">Down-regulated after axotomy in dorsal root ganglia.</text>
</comment>
<comment type="domain">
    <text evidence="16">The sequence contains 4 internal repeats, each with 5 hydrophobic segments (S1, S2, S3, S5, S6) and one positively charged segment (S4). Segments S4 are probably the voltage-sensors and are characterized by a series of positively charged amino acids at every third position.</text>
</comment>
<comment type="PTM">
    <text evidence="1">Ubiquitinated by NEDD4L; which promotes its endocytosis.</text>
</comment>
<comment type="PTM">
    <text evidence="1">Phosphorylation at Ser-1452 by PKC in a highly conserved cytoplasmic loop slows inactivation of the sodium channel and reduces peak sodium currents.</text>
</comment>
<comment type="PTM">
    <text evidence="3">Lacks the cysteine which covalently binds the conotoxin GVIIJ. This cysteine (position 815) is speculated in other sodium channel subunits alpha to be implied in covalent binding with the sodium channel subunit beta-2 or beta-4.</text>
</comment>
<comment type="similarity">
    <text evidence="16">Belongs to the sodium channel (TC 1.A.1.10) family. Nav1.8/SCN10A subfamily.</text>
</comment>
<gene>
    <name evidence="17" type="primary">Scn10a</name>
    <name type="synonym">Sns</name>
</gene>
<evidence type="ECO:0000250" key="1"/>
<evidence type="ECO:0000250" key="2">
    <source>
        <dbReference type="UniProtKB" id="D0E0C2"/>
    </source>
</evidence>
<evidence type="ECO:0000250" key="3">
    <source>
        <dbReference type="UniProtKB" id="P15389"/>
    </source>
</evidence>
<evidence type="ECO:0000250" key="4">
    <source>
        <dbReference type="UniProtKB" id="Q14524"/>
    </source>
</evidence>
<evidence type="ECO:0000255" key="5"/>
<evidence type="ECO:0000256" key="6">
    <source>
        <dbReference type="SAM" id="MobiDB-lite"/>
    </source>
</evidence>
<evidence type="ECO:0000269" key="7">
    <source>
    </source>
</evidence>
<evidence type="ECO:0000269" key="8">
    <source>
    </source>
</evidence>
<evidence type="ECO:0000269" key="9">
    <source>
    </source>
</evidence>
<evidence type="ECO:0000269" key="10">
    <source>
    </source>
</evidence>
<evidence type="ECO:0000269" key="11">
    <source>
    </source>
</evidence>
<evidence type="ECO:0000269" key="12">
    <source>
    </source>
</evidence>
<evidence type="ECO:0000269" key="13">
    <source>
    </source>
</evidence>
<evidence type="ECO:0000269" key="14">
    <source>
    </source>
</evidence>
<evidence type="ECO:0000303" key="15">
    <source>
    </source>
</evidence>
<evidence type="ECO:0000305" key="16"/>
<evidence type="ECO:0000312" key="17">
    <source>
        <dbReference type="RGD" id="3629"/>
    </source>
</evidence>
<accession>Q62968</accession>
<accession>Q63554</accession>
<accession>Q6EWG6</accession>